<organism>
    <name type="scientific">Cyanidium caldarium</name>
    <name type="common">Red alga</name>
    <dbReference type="NCBI Taxonomy" id="2771"/>
    <lineage>
        <taxon>Eukaryota</taxon>
        <taxon>Rhodophyta</taxon>
        <taxon>Bangiophyceae</taxon>
        <taxon>Cyanidiales</taxon>
        <taxon>Cyanidiaceae</taxon>
        <taxon>Cyanidium</taxon>
    </lineage>
</organism>
<proteinExistence type="inferred from homology"/>
<dbReference type="EMBL" id="AF022186">
    <property type="protein sequence ID" value="AAF13007.1"/>
    <property type="molecule type" value="Genomic_DNA"/>
</dbReference>
<dbReference type="RefSeq" id="NP_045039.1">
    <property type="nucleotide sequence ID" value="NC_001840.1"/>
</dbReference>
<dbReference type="SMR" id="Q9TM28"/>
<dbReference type="GeneID" id="800203"/>
<dbReference type="GO" id="GO:0009535">
    <property type="term" value="C:chloroplast thylakoid membrane"/>
    <property type="evidence" value="ECO:0007669"/>
    <property type="project" value="UniProtKB-SubCell"/>
</dbReference>
<dbReference type="GO" id="GO:0045259">
    <property type="term" value="C:proton-transporting ATP synthase complex"/>
    <property type="evidence" value="ECO:0007669"/>
    <property type="project" value="UniProtKB-KW"/>
</dbReference>
<dbReference type="GO" id="GO:0005524">
    <property type="term" value="F:ATP binding"/>
    <property type="evidence" value="ECO:0007669"/>
    <property type="project" value="UniProtKB-KW"/>
</dbReference>
<dbReference type="GO" id="GO:0046933">
    <property type="term" value="F:proton-transporting ATP synthase activity, rotational mechanism"/>
    <property type="evidence" value="ECO:0007669"/>
    <property type="project" value="UniProtKB-UniRule"/>
</dbReference>
<dbReference type="CDD" id="cd06503">
    <property type="entry name" value="ATP-synt_Fo_b"/>
    <property type="match status" value="1"/>
</dbReference>
<dbReference type="HAMAP" id="MF_01398">
    <property type="entry name" value="ATP_synth_b_bprime"/>
    <property type="match status" value="1"/>
</dbReference>
<dbReference type="InterPro" id="IPR002146">
    <property type="entry name" value="ATP_synth_b/b'su_bac/chlpt"/>
</dbReference>
<dbReference type="Pfam" id="PF00430">
    <property type="entry name" value="ATP-synt_B"/>
    <property type="match status" value="1"/>
</dbReference>
<protein>
    <recommendedName>
        <fullName evidence="1">ATP synthase subunit b, chloroplastic</fullName>
    </recommendedName>
    <alternativeName>
        <fullName evidence="1">ATP synthase F(0) sector subunit b</fullName>
    </alternativeName>
    <alternativeName>
        <fullName evidence="1">ATPase subunit I</fullName>
    </alternativeName>
</protein>
<accession>Q9TM28</accession>
<evidence type="ECO:0000255" key="1">
    <source>
        <dbReference type="HAMAP-Rule" id="MF_01398"/>
    </source>
</evidence>
<comment type="function">
    <text evidence="1">F(1)F(0) ATP synthase produces ATP from ADP in the presence of a proton or sodium gradient. F-type ATPases consist of two structural domains, F(1) containing the extramembraneous catalytic core and F(0) containing the membrane proton channel, linked together by a central stalk and a peripheral stalk. During catalysis, ATP synthesis in the catalytic domain of F(1) is coupled via a rotary mechanism of the central stalk subunits to proton translocation.</text>
</comment>
<comment type="function">
    <text evidence="1">Component of the F(0) channel, it forms part of the peripheral stalk, linking F(1) to F(0).</text>
</comment>
<comment type="subunit">
    <text evidence="1">F-type ATPases have 2 components, F(1) - the catalytic core - and F(0) - the membrane proton channel. F(1) has five subunits: alpha(3), beta(3), gamma(1), delta(1), epsilon(1). F(0) has four main subunits: a(1), b(1), b'(1) and c(10-14). The alpha and beta chains form an alternating ring which encloses part of the gamma chain. F(1) is attached to F(0) by a central stalk formed by the gamma and epsilon chains, while a peripheral stalk is formed by the delta, b and b' chains.</text>
</comment>
<comment type="subcellular location">
    <subcellularLocation>
        <location evidence="1">Plastid</location>
        <location evidence="1">Chloroplast thylakoid membrane</location>
        <topology evidence="1">Single-pass membrane protein</topology>
    </subcellularLocation>
</comment>
<comment type="miscellaneous">
    <text>In plastids the F-type ATPase is also known as CF(1)CF(0).</text>
</comment>
<comment type="similarity">
    <text evidence="1">Belongs to the ATPase B chain family.</text>
</comment>
<sequence>MRSQSLNFVASNTTSDFISNLLESNVINIIILISLLIYLGKRTIVTNLNDRKLNIQCSILEAEKKLSQAQLRLAEAEKKITESEEIISILKHEAKIAANKIKELIVNNAKRKIDKIILDGKTIIANTEIEIMNQIKNRIISTAIDKTKIKLTKNLQAETIERITDNKITFLNNNL</sequence>
<keyword id="KW-0066">ATP synthesis</keyword>
<keyword id="KW-0067">ATP-binding</keyword>
<keyword id="KW-0138">CF(0)</keyword>
<keyword id="KW-0150">Chloroplast</keyword>
<keyword id="KW-0375">Hydrogen ion transport</keyword>
<keyword id="KW-0406">Ion transport</keyword>
<keyword id="KW-0472">Membrane</keyword>
<keyword id="KW-0547">Nucleotide-binding</keyword>
<keyword id="KW-0934">Plastid</keyword>
<keyword id="KW-0793">Thylakoid</keyword>
<keyword id="KW-0812">Transmembrane</keyword>
<keyword id="KW-1133">Transmembrane helix</keyword>
<keyword id="KW-0813">Transport</keyword>
<name>ATPF_CYACA</name>
<geneLocation type="chloroplast"/>
<reference key="1">
    <citation type="journal article" date="2000" name="J. Mol. Evol.">
        <title>The structure and gene repertoire of an ancient red algal plastid genome.</title>
        <authorList>
            <person name="Gloeckner G."/>
            <person name="Rosenthal A."/>
            <person name="Valentin K.-U."/>
        </authorList>
    </citation>
    <scope>NUCLEOTIDE SEQUENCE [LARGE SCALE GENOMIC DNA]</scope>
    <source>
        <strain>RK-1</strain>
    </source>
</reference>
<gene>
    <name evidence="1" type="primary">atpF</name>
</gene>
<feature type="chain" id="PRO_0000082406" description="ATP synthase subunit b, chloroplastic">
    <location>
        <begin position="1"/>
        <end position="175"/>
    </location>
</feature>
<feature type="transmembrane region" description="Helical" evidence="1">
    <location>
        <begin position="21"/>
        <end position="40"/>
    </location>
</feature>